<evidence type="ECO:0000255" key="1">
    <source>
        <dbReference type="HAMAP-Rule" id="MF_01342"/>
    </source>
</evidence>
<evidence type="ECO:0000305" key="2"/>
<dbReference type="EMBL" id="CP000802">
    <property type="protein sequence ID" value="ABV07722.1"/>
    <property type="molecule type" value="Genomic_DNA"/>
</dbReference>
<dbReference type="RefSeq" id="WP_000941212.1">
    <property type="nucleotide sequence ID" value="NC_009800.1"/>
</dbReference>
<dbReference type="SMR" id="A8A5B8"/>
<dbReference type="GeneID" id="93778674"/>
<dbReference type="KEGG" id="ecx:EcHS_A3507"/>
<dbReference type="HOGENOM" id="CLU_078858_2_1_6"/>
<dbReference type="GO" id="GO:0022625">
    <property type="term" value="C:cytosolic large ribosomal subunit"/>
    <property type="evidence" value="ECO:0007669"/>
    <property type="project" value="TreeGrafter"/>
</dbReference>
<dbReference type="GO" id="GO:0019843">
    <property type="term" value="F:rRNA binding"/>
    <property type="evidence" value="ECO:0007669"/>
    <property type="project" value="UniProtKB-UniRule"/>
</dbReference>
<dbReference type="GO" id="GO:0003735">
    <property type="term" value="F:structural constituent of ribosome"/>
    <property type="evidence" value="ECO:0007669"/>
    <property type="project" value="InterPro"/>
</dbReference>
<dbReference type="GO" id="GO:0000049">
    <property type="term" value="F:tRNA binding"/>
    <property type="evidence" value="ECO:0007669"/>
    <property type="project" value="UniProtKB-KW"/>
</dbReference>
<dbReference type="GO" id="GO:0006412">
    <property type="term" value="P:translation"/>
    <property type="evidence" value="ECO:0007669"/>
    <property type="project" value="UniProtKB-UniRule"/>
</dbReference>
<dbReference type="CDD" id="cd01433">
    <property type="entry name" value="Ribosomal_L16_L10e"/>
    <property type="match status" value="1"/>
</dbReference>
<dbReference type="FunFam" id="3.90.1170.10:FF:000001">
    <property type="entry name" value="50S ribosomal protein L16"/>
    <property type="match status" value="1"/>
</dbReference>
<dbReference type="Gene3D" id="3.90.1170.10">
    <property type="entry name" value="Ribosomal protein L10e/L16"/>
    <property type="match status" value="1"/>
</dbReference>
<dbReference type="HAMAP" id="MF_01342">
    <property type="entry name" value="Ribosomal_uL16"/>
    <property type="match status" value="1"/>
</dbReference>
<dbReference type="InterPro" id="IPR047873">
    <property type="entry name" value="Ribosomal_uL16"/>
</dbReference>
<dbReference type="InterPro" id="IPR000114">
    <property type="entry name" value="Ribosomal_uL16_bact-type"/>
</dbReference>
<dbReference type="InterPro" id="IPR020798">
    <property type="entry name" value="Ribosomal_uL16_CS"/>
</dbReference>
<dbReference type="InterPro" id="IPR016180">
    <property type="entry name" value="Ribosomal_uL16_dom"/>
</dbReference>
<dbReference type="InterPro" id="IPR036920">
    <property type="entry name" value="Ribosomal_uL16_sf"/>
</dbReference>
<dbReference type="NCBIfam" id="TIGR01164">
    <property type="entry name" value="rplP_bact"/>
    <property type="match status" value="1"/>
</dbReference>
<dbReference type="PANTHER" id="PTHR12220">
    <property type="entry name" value="50S/60S RIBOSOMAL PROTEIN L16"/>
    <property type="match status" value="1"/>
</dbReference>
<dbReference type="PANTHER" id="PTHR12220:SF13">
    <property type="entry name" value="LARGE RIBOSOMAL SUBUNIT PROTEIN UL16M"/>
    <property type="match status" value="1"/>
</dbReference>
<dbReference type="Pfam" id="PF00252">
    <property type="entry name" value="Ribosomal_L16"/>
    <property type="match status" value="1"/>
</dbReference>
<dbReference type="PRINTS" id="PR00060">
    <property type="entry name" value="RIBOSOMALL16"/>
</dbReference>
<dbReference type="SUPFAM" id="SSF54686">
    <property type="entry name" value="Ribosomal protein L16p/L10e"/>
    <property type="match status" value="1"/>
</dbReference>
<dbReference type="PROSITE" id="PS00586">
    <property type="entry name" value="RIBOSOMAL_L16_1"/>
    <property type="match status" value="1"/>
</dbReference>
<dbReference type="PROSITE" id="PS00701">
    <property type="entry name" value="RIBOSOMAL_L16_2"/>
    <property type="match status" value="1"/>
</dbReference>
<gene>
    <name evidence="1" type="primary">rplP</name>
    <name type="ordered locus">EcHS_A3507</name>
</gene>
<reference key="1">
    <citation type="journal article" date="2008" name="J. Bacteriol.">
        <title>The pangenome structure of Escherichia coli: comparative genomic analysis of E. coli commensal and pathogenic isolates.</title>
        <authorList>
            <person name="Rasko D.A."/>
            <person name="Rosovitz M.J."/>
            <person name="Myers G.S.A."/>
            <person name="Mongodin E.F."/>
            <person name="Fricke W.F."/>
            <person name="Gajer P."/>
            <person name="Crabtree J."/>
            <person name="Sebaihia M."/>
            <person name="Thomson N.R."/>
            <person name="Chaudhuri R."/>
            <person name="Henderson I.R."/>
            <person name="Sperandio V."/>
            <person name="Ravel J."/>
        </authorList>
    </citation>
    <scope>NUCLEOTIDE SEQUENCE [LARGE SCALE GENOMIC DNA]</scope>
    <source>
        <strain>HS</strain>
    </source>
</reference>
<name>RL16_ECOHS</name>
<accession>A8A5B8</accession>
<comment type="function">
    <text evidence="1">Binds 23S rRNA and is also seen to make contacts with the A and possibly P site tRNAs.</text>
</comment>
<comment type="subunit">
    <text evidence="1">Part of the 50S ribosomal subunit.</text>
</comment>
<comment type="similarity">
    <text evidence="1">Belongs to the universal ribosomal protein uL16 family.</text>
</comment>
<proteinExistence type="inferred from homology"/>
<feature type="chain" id="PRO_1000067677" description="Large ribosomal subunit protein uL16">
    <location>
        <begin position="1"/>
        <end position="136"/>
    </location>
</feature>
<protein>
    <recommendedName>
        <fullName evidence="1">Large ribosomal subunit protein uL16</fullName>
    </recommendedName>
    <alternativeName>
        <fullName evidence="2">50S ribosomal protein L16</fullName>
    </alternativeName>
</protein>
<keyword id="KW-0687">Ribonucleoprotein</keyword>
<keyword id="KW-0689">Ribosomal protein</keyword>
<keyword id="KW-0694">RNA-binding</keyword>
<keyword id="KW-0699">rRNA-binding</keyword>
<keyword id="KW-0820">tRNA-binding</keyword>
<sequence length="136" mass="15281">MLQPKRTKFRKMHKGRNRGLAQGTDVSFGSFGLKAVGRGRLTARQIEAARRAMTRAVKRQGKIWIRVFPDKPITEKPLAVRMGKGKGNVEYWVALIQPGKVLYEMDGVPEELAREAFKLAAAKLPIKTTFVTKTVM</sequence>
<organism>
    <name type="scientific">Escherichia coli O9:H4 (strain HS)</name>
    <dbReference type="NCBI Taxonomy" id="331112"/>
    <lineage>
        <taxon>Bacteria</taxon>
        <taxon>Pseudomonadati</taxon>
        <taxon>Pseudomonadota</taxon>
        <taxon>Gammaproteobacteria</taxon>
        <taxon>Enterobacterales</taxon>
        <taxon>Enterobacteriaceae</taxon>
        <taxon>Escherichia</taxon>
    </lineage>
</organism>